<comment type="function">
    <text evidence="1">Excises uracil residues from the DNA which can arise as a result of misincorporation of dUMP residues by DNA polymerase or due to deamination of cytosine.</text>
</comment>
<comment type="catalytic activity">
    <reaction evidence="1">
        <text>Hydrolyzes single-stranded DNA or mismatched double-stranded DNA and polynucleotides, releasing free uracil.</text>
        <dbReference type="EC" id="3.2.2.27"/>
    </reaction>
</comment>
<comment type="subcellular location">
    <subcellularLocation>
        <location evidence="1">Cytoplasm</location>
    </subcellularLocation>
</comment>
<comment type="similarity">
    <text evidence="1">Belongs to the uracil-DNA glycosylase (UDG) superfamily. UNG family.</text>
</comment>
<organism>
    <name type="scientific">Pseudomonas savastanoi pv. phaseolicola (strain 1448A / Race 6)</name>
    <name type="common">Pseudomonas syringae pv. phaseolicola (strain 1448A / Race 6)</name>
    <dbReference type="NCBI Taxonomy" id="264730"/>
    <lineage>
        <taxon>Bacteria</taxon>
        <taxon>Pseudomonadati</taxon>
        <taxon>Pseudomonadota</taxon>
        <taxon>Gammaproteobacteria</taxon>
        <taxon>Pseudomonadales</taxon>
        <taxon>Pseudomonadaceae</taxon>
        <taxon>Pseudomonas</taxon>
    </lineage>
</organism>
<dbReference type="EC" id="3.2.2.27" evidence="1"/>
<dbReference type="EMBL" id="CP000058">
    <property type="protein sequence ID" value="AAZ35800.1"/>
    <property type="molecule type" value="Genomic_DNA"/>
</dbReference>
<dbReference type="RefSeq" id="WP_011169361.1">
    <property type="nucleotide sequence ID" value="NC_005773.3"/>
</dbReference>
<dbReference type="SMR" id="Q48ET5"/>
<dbReference type="KEGG" id="psp:PSPPH_3967"/>
<dbReference type="eggNOG" id="COG0692">
    <property type="taxonomic scope" value="Bacteria"/>
</dbReference>
<dbReference type="HOGENOM" id="CLU_032162_3_1_6"/>
<dbReference type="Proteomes" id="UP000000551">
    <property type="component" value="Chromosome"/>
</dbReference>
<dbReference type="GO" id="GO:0005737">
    <property type="term" value="C:cytoplasm"/>
    <property type="evidence" value="ECO:0007669"/>
    <property type="project" value="UniProtKB-SubCell"/>
</dbReference>
<dbReference type="GO" id="GO:0004844">
    <property type="term" value="F:uracil DNA N-glycosylase activity"/>
    <property type="evidence" value="ECO:0007669"/>
    <property type="project" value="UniProtKB-UniRule"/>
</dbReference>
<dbReference type="GO" id="GO:0097510">
    <property type="term" value="P:base-excision repair, AP site formation via deaminated base removal"/>
    <property type="evidence" value="ECO:0007669"/>
    <property type="project" value="TreeGrafter"/>
</dbReference>
<dbReference type="CDD" id="cd10027">
    <property type="entry name" value="UDG-F1-like"/>
    <property type="match status" value="1"/>
</dbReference>
<dbReference type="FunFam" id="3.40.470.10:FF:000001">
    <property type="entry name" value="Uracil-DNA glycosylase"/>
    <property type="match status" value="1"/>
</dbReference>
<dbReference type="Gene3D" id="3.40.470.10">
    <property type="entry name" value="Uracil-DNA glycosylase-like domain"/>
    <property type="match status" value="1"/>
</dbReference>
<dbReference type="HAMAP" id="MF_00148">
    <property type="entry name" value="UDG"/>
    <property type="match status" value="1"/>
</dbReference>
<dbReference type="InterPro" id="IPR002043">
    <property type="entry name" value="UDG_fam1"/>
</dbReference>
<dbReference type="InterPro" id="IPR018085">
    <property type="entry name" value="Ura-DNA_Glyclase_AS"/>
</dbReference>
<dbReference type="InterPro" id="IPR005122">
    <property type="entry name" value="Uracil-DNA_glycosylase-like"/>
</dbReference>
<dbReference type="InterPro" id="IPR036895">
    <property type="entry name" value="Uracil-DNA_glycosylase-like_sf"/>
</dbReference>
<dbReference type="NCBIfam" id="NF003588">
    <property type="entry name" value="PRK05254.1-1"/>
    <property type="match status" value="1"/>
</dbReference>
<dbReference type="NCBIfam" id="NF003589">
    <property type="entry name" value="PRK05254.1-2"/>
    <property type="match status" value="1"/>
</dbReference>
<dbReference type="NCBIfam" id="NF003591">
    <property type="entry name" value="PRK05254.1-4"/>
    <property type="match status" value="1"/>
</dbReference>
<dbReference type="NCBIfam" id="NF003592">
    <property type="entry name" value="PRK05254.1-5"/>
    <property type="match status" value="1"/>
</dbReference>
<dbReference type="NCBIfam" id="TIGR00628">
    <property type="entry name" value="ung"/>
    <property type="match status" value="1"/>
</dbReference>
<dbReference type="PANTHER" id="PTHR11264">
    <property type="entry name" value="URACIL-DNA GLYCOSYLASE"/>
    <property type="match status" value="1"/>
</dbReference>
<dbReference type="PANTHER" id="PTHR11264:SF0">
    <property type="entry name" value="URACIL-DNA GLYCOSYLASE"/>
    <property type="match status" value="1"/>
</dbReference>
<dbReference type="Pfam" id="PF03167">
    <property type="entry name" value="UDG"/>
    <property type="match status" value="1"/>
</dbReference>
<dbReference type="SMART" id="SM00986">
    <property type="entry name" value="UDG"/>
    <property type="match status" value="1"/>
</dbReference>
<dbReference type="SMART" id="SM00987">
    <property type="entry name" value="UreE_C"/>
    <property type="match status" value="1"/>
</dbReference>
<dbReference type="SUPFAM" id="SSF52141">
    <property type="entry name" value="Uracil-DNA glycosylase-like"/>
    <property type="match status" value="1"/>
</dbReference>
<dbReference type="PROSITE" id="PS00130">
    <property type="entry name" value="U_DNA_GLYCOSYLASE"/>
    <property type="match status" value="1"/>
</dbReference>
<proteinExistence type="inferred from homology"/>
<keyword id="KW-0963">Cytoplasm</keyword>
<keyword id="KW-0227">DNA damage</keyword>
<keyword id="KW-0234">DNA repair</keyword>
<keyword id="KW-0378">Hydrolase</keyword>
<feature type="chain" id="PRO_1000009925" description="Uracil-DNA glycosylase">
    <location>
        <begin position="1"/>
        <end position="230"/>
    </location>
</feature>
<feature type="active site" description="Proton acceptor" evidence="1">
    <location>
        <position position="70"/>
    </location>
</feature>
<sequence length="230" mass="25820">MTSDDRIKLEPIWKEALRDEFEQPYMAQLREFLRQEHAAGKEIYPPGPLIFNALNSTPLNNVKVVILGQDPYHGPNQAHGLCFSVQPGVPTPPSLVNIYKELKRDLNIDIPNHGCLQSWADQGVLLLNTTLTVERANAASHAGKGWQHFTDRIIQVVSEHQPHLVFLLWGAHAQSKQKLVDATKHLVLTSVHPSPLSAYKGFLGNGHFGRANKYLEQNGIEPIDWRLPVL</sequence>
<name>UNG_PSE14</name>
<gene>
    <name evidence="1" type="primary">ung</name>
    <name type="ordered locus">PSPPH_3967</name>
</gene>
<protein>
    <recommendedName>
        <fullName evidence="1">Uracil-DNA glycosylase</fullName>
        <shortName evidence="1">UDG</shortName>
        <ecNumber evidence="1">3.2.2.27</ecNumber>
    </recommendedName>
</protein>
<evidence type="ECO:0000255" key="1">
    <source>
        <dbReference type="HAMAP-Rule" id="MF_00148"/>
    </source>
</evidence>
<reference key="1">
    <citation type="journal article" date="2005" name="J. Bacteriol.">
        <title>Whole-genome sequence analysis of Pseudomonas syringae pv. phaseolicola 1448A reveals divergence among pathovars in genes involved in virulence and transposition.</title>
        <authorList>
            <person name="Joardar V."/>
            <person name="Lindeberg M."/>
            <person name="Jackson R.W."/>
            <person name="Selengut J."/>
            <person name="Dodson R."/>
            <person name="Brinkac L.M."/>
            <person name="Daugherty S.C."/>
            <person name="DeBoy R.T."/>
            <person name="Durkin A.S."/>
            <person name="Gwinn Giglio M."/>
            <person name="Madupu R."/>
            <person name="Nelson W.C."/>
            <person name="Rosovitz M.J."/>
            <person name="Sullivan S.A."/>
            <person name="Crabtree J."/>
            <person name="Creasy T."/>
            <person name="Davidsen T.M."/>
            <person name="Haft D.H."/>
            <person name="Zafar N."/>
            <person name="Zhou L."/>
            <person name="Halpin R."/>
            <person name="Holley T."/>
            <person name="Khouri H.M."/>
            <person name="Feldblyum T.V."/>
            <person name="White O."/>
            <person name="Fraser C.M."/>
            <person name="Chatterjee A.K."/>
            <person name="Cartinhour S."/>
            <person name="Schneider D."/>
            <person name="Mansfield J.W."/>
            <person name="Collmer A."/>
            <person name="Buell R."/>
        </authorList>
    </citation>
    <scope>NUCLEOTIDE SEQUENCE [LARGE SCALE GENOMIC DNA]</scope>
    <source>
        <strain>1448A / Race 6</strain>
    </source>
</reference>
<accession>Q48ET5</accession>